<dbReference type="EMBL" id="AL138646">
    <property type="protein sequence ID" value="CAB81826.1"/>
    <property type="molecule type" value="Genomic_DNA"/>
</dbReference>
<dbReference type="EMBL" id="CP002686">
    <property type="protein sequence ID" value="AEE80055.1"/>
    <property type="molecule type" value="Genomic_DNA"/>
</dbReference>
<dbReference type="PIR" id="T47851">
    <property type="entry name" value="T47851"/>
</dbReference>
<dbReference type="RefSeq" id="NP_191599.1">
    <property type="nucleotide sequence ID" value="NM_115904.3"/>
</dbReference>
<dbReference type="FunCoup" id="Q9M219">
    <property type="interactions" value="1521"/>
</dbReference>
<dbReference type="IntAct" id="Q9M219">
    <property type="interactions" value="1"/>
</dbReference>
<dbReference type="STRING" id="3702.Q9M219"/>
<dbReference type="iPTMnet" id="Q9M219"/>
<dbReference type="PaxDb" id="3702-AT3G60400.1"/>
<dbReference type="ProteomicsDB" id="250810"/>
<dbReference type="EnsemblPlants" id="AT3G60400.1">
    <property type="protein sequence ID" value="AT3G60400.1"/>
    <property type="gene ID" value="AT3G60400"/>
</dbReference>
<dbReference type="GeneID" id="825211"/>
<dbReference type="Gramene" id="AT3G60400.1">
    <property type="protein sequence ID" value="AT3G60400.1"/>
    <property type="gene ID" value="AT3G60400"/>
</dbReference>
<dbReference type="KEGG" id="ath:AT3G60400"/>
<dbReference type="Araport" id="AT3G60400"/>
<dbReference type="TAIR" id="AT3G60400">
    <property type="gene designation" value="SHOT1"/>
</dbReference>
<dbReference type="eggNOG" id="KOG1267">
    <property type="taxonomic scope" value="Eukaryota"/>
</dbReference>
<dbReference type="HOGENOM" id="CLU_021017_0_1_1"/>
<dbReference type="InParanoid" id="Q9M219"/>
<dbReference type="OMA" id="APKILNQ"/>
<dbReference type="OrthoDB" id="899381at2759"/>
<dbReference type="PhylomeDB" id="Q9M219"/>
<dbReference type="PRO" id="PR:Q9M219"/>
<dbReference type="Proteomes" id="UP000006548">
    <property type="component" value="Chromosome 3"/>
</dbReference>
<dbReference type="ExpressionAtlas" id="Q9M219">
    <property type="expression patterns" value="baseline and differential"/>
</dbReference>
<dbReference type="GO" id="GO:0005739">
    <property type="term" value="C:mitochondrion"/>
    <property type="evidence" value="ECO:0000314"/>
    <property type="project" value="TAIR"/>
</dbReference>
<dbReference type="GO" id="GO:0003690">
    <property type="term" value="F:double-stranded DNA binding"/>
    <property type="evidence" value="ECO:0007669"/>
    <property type="project" value="InterPro"/>
</dbReference>
<dbReference type="GO" id="GO:0006353">
    <property type="term" value="P:DNA-templated transcription termination"/>
    <property type="evidence" value="ECO:0007669"/>
    <property type="project" value="UniProtKB-KW"/>
</dbReference>
<dbReference type="GO" id="GO:0007005">
    <property type="term" value="P:mitochondrion organization"/>
    <property type="evidence" value="ECO:0000315"/>
    <property type="project" value="UniProtKB"/>
</dbReference>
<dbReference type="GO" id="GO:0006355">
    <property type="term" value="P:regulation of DNA-templated transcription"/>
    <property type="evidence" value="ECO:0007669"/>
    <property type="project" value="InterPro"/>
</dbReference>
<dbReference type="FunFam" id="1.25.70.10:FF:000017">
    <property type="entry name" value="Transcription termination factor MTEF18, mitochondrial"/>
    <property type="match status" value="1"/>
</dbReference>
<dbReference type="FunFam" id="1.25.70.10:FF:000018">
    <property type="entry name" value="Transcription termination factor MTEF18, mitochondrial"/>
    <property type="match status" value="1"/>
</dbReference>
<dbReference type="Gene3D" id="1.25.70.10">
    <property type="entry name" value="Transcription termination factor 3, mitochondrial"/>
    <property type="match status" value="2"/>
</dbReference>
<dbReference type="InterPro" id="IPR003690">
    <property type="entry name" value="MTERF"/>
</dbReference>
<dbReference type="InterPro" id="IPR038538">
    <property type="entry name" value="MTERF_sf"/>
</dbReference>
<dbReference type="PANTHER" id="PTHR13068">
    <property type="entry name" value="CGI-12 PROTEIN-RELATED"/>
    <property type="match status" value="1"/>
</dbReference>
<dbReference type="PANTHER" id="PTHR13068:SF113">
    <property type="entry name" value="TRANSCRIPTION TERMINATION FACTOR MTEF18, MITOCHONDRIAL"/>
    <property type="match status" value="1"/>
</dbReference>
<dbReference type="Pfam" id="PF02536">
    <property type="entry name" value="mTERF"/>
    <property type="match status" value="2"/>
</dbReference>
<dbReference type="SMART" id="SM00733">
    <property type="entry name" value="Mterf"/>
    <property type="match status" value="5"/>
</dbReference>
<organism>
    <name type="scientific">Arabidopsis thaliana</name>
    <name type="common">Mouse-ear cress</name>
    <dbReference type="NCBI Taxonomy" id="3702"/>
    <lineage>
        <taxon>Eukaryota</taxon>
        <taxon>Viridiplantae</taxon>
        <taxon>Streptophyta</taxon>
        <taxon>Embryophyta</taxon>
        <taxon>Tracheophyta</taxon>
        <taxon>Spermatophyta</taxon>
        <taxon>Magnoliopsida</taxon>
        <taxon>eudicotyledons</taxon>
        <taxon>Gunneridae</taxon>
        <taxon>Pentapetalae</taxon>
        <taxon>rosids</taxon>
        <taxon>malvids</taxon>
        <taxon>Brassicales</taxon>
        <taxon>Brassicaceae</taxon>
        <taxon>Camelineae</taxon>
        <taxon>Arabidopsis</taxon>
    </lineage>
</organism>
<protein>
    <recommendedName>
        <fullName evidence="6">Transcription termination factor MTEF18, mitochondrial</fullName>
    </recommendedName>
    <alternativeName>
        <fullName evidence="5">Mitochondrial transcription termination factor 18</fullName>
    </alternativeName>
    <alternativeName>
        <fullName evidence="4">Protein SUPPRESSOR OF HOT1-4 1</fullName>
    </alternativeName>
</protein>
<keyword id="KW-0496">Mitochondrion</keyword>
<keyword id="KW-1185">Reference proteome</keyword>
<keyword id="KW-0804">Transcription</keyword>
<keyword id="KW-0805">Transcription regulation</keyword>
<keyword id="KW-0806">Transcription termination</keyword>
<keyword id="KW-0809">Transit peptide</keyword>
<comment type="function">
    <text evidence="3">Transcription termination factor involved in the regulation of mitochondrial-encoded gene expression. Essential for normal plant growth and development.</text>
</comment>
<comment type="subcellular location">
    <subcellularLocation>
        <location evidence="2 3">Mitochondrion</location>
    </subcellularLocation>
</comment>
<comment type="disruption phenotype">
    <text evidence="3">Severe growth and developmental retardation. Dwarf plants.</text>
</comment>
<comment type="similarity">
    <text evidence="6">Belongs to the mTERF family.</text>
</comment>
<sequence>MFMVRLKFASISHNFSTVAAKHRRVPSKYKSLAIGKAQQAITDYLHTTRSLSYTHAEQIASNASVSIRNLILKLDFSVPTFSKSLRKHLSYHPINEFEFFFESIGIDYSEVSEFLPEKKFFFSEDRTVLDAAFALSGFGFPWNKLGKLYKEERLVFVQRPGEIESRLLKFKDIGFSTVAVIGTCLAIPRTLCGGGELGSEIRCLFVKLKRLFDEFDSHHLFEENVDSWLAVSRKIRIFYDLGCENEEMWELMCRNKSLFLEYSEEALMNKAGYFCRFGVSKEDAALLILRNPAIMNFDLEKPVISVTGMLKHFGLRQDEVDAVAQKYPYVFGRNQLKNLPYVLRAIDLHERIFDILKNGNHHLLASYTLMDPDEDLEREYQEGLEELQNSRTKRHNIQKLDFLHEIGFGENGITMKVLQHVHGTAVELHDRFQILLNSGIIFSKICMLIRSAPKILNQKPHSIQDKLRFLCGEMGDSLDYLEVFPAYLCFDLENRISPRFRFHKWLVEKGFSEKSYSIASIVATSEKAFIARLYGIHPAIPKHWFERFSSRKTRDTVS</sequence>
<reference key="1">
    <citation type="journal article" date="2000" name="Nature">
        <title>Sequence and analysis of chromosome 3 of the plant Arabidopsis thaliana.</title>
        <authorList>
            <person name="Salanoubat M."/>
            <person name="Lemcke K."/>
            <person name="Rieger M."/>
            <person name="Ansorge W."/>
            <person name="Unseld M."/>
            <person name="Fartmann B."/>
            <person name="Valle G."/>
            <person name="Bloecker H."/>
            <person name="Perez-Alonso M."/>
            <person name="Obermaier B."/>
            <person name="Delseny M."/>
            <person name="Boutry M."/>
            <person name="Grivell L.A."/>
            <person name="Mache R."/>
            <person name="Puigdomenech P."/>
            <person name="De Simone V."/>
            <person name="Choisne N."/>
            <person name="Artiguenave F."/>
            <person name="Robert C."/>
            <person name="Brottier P."/>
            <person name="Wincker P."/>
            <person name="Cattolico L."/>
            <person name="Weissenbach J."/>
            <person name="Saurin W."/>
            <person name="Quetier F."/>
            <person name="Schaefer M."/>
            <person name="Mueller-Auer S."/>
            <person name="Gabel C."/>
            <person name="Fuchs M."/>
            <person name="Benes V."/>
            <person name="Wurmbach E."/>
            <person name="Drzonek H."/>
            <person name="Erfle H."/>
            <person name="Jordan N."/>
            <person name="Bangert S."/>
            <person name="Wiedelmann R."/>
            <person name="Kranz H."/>
            <person name="Voss H."/>
            <person name="Holland R."/>
            <person name="Brandt P."/>
            <person name="Nyakatura G."/>
            <person name="Vezzi A."/>
            <person name="D'Angelo M."/>
            <person name="Pallavicini A."/>
            <person name="Toppo S."/>
            <person name="Simionati B."/>
            <person name="Conrad A."/>
            <person name="Hornischer K."/>
            <person name="Kauer G."/>
            <person name="Loehnert T.-H."/>
            <person name="Nordsiek G."/>
            <person name="Reichelt J."/>
            <person name="Scharfe M."/>
            <person name="Schoen O."/>
            <person name="Bargues M."/>
            <person name="Terol J."/>
            <person name="Climent J."/>
            <person name="Navarro P."/>
            <person name="Collado C."/>
            <person name="Perez-Perez A."/>
            <person name="Ottenwaelder B."/>
            <person name="Duchemin D."/>
            <person name="Cooke R."/>
            <person name="Laudie M."/>
            <person name="Berger-Llauro C."/>
            <person name="Purnelle B."/>
            <person name="Masuy D."/>
            <person name="de Haan M."/>
            <person name="Maarse A.C."/>
            <person name="Alcaraz J.-P."/>
            <person name="Cottet A."/>
            <person name="Casacuberta E."/>
            <person name="Monfort A."/>
            <person name="Argiriou A."/>
            <person name="Flores M."/>
            <person name="Liguori R."/>
            <person name="Vitale D."/>
            <person name="Mannhaupt G."/>
            <person name="Haase D."/>
            <person name="Schoof H."/>
            <person name="Rudd S."/>
            <person name="Zaccaria P."/>
            <person name="Mewes H.-W."/>
            <person name="Mayer K.F.X."/>
            <person name="Kaul S."/>
            <person name="Town C.D."/>
            <person name="Koo H.L."/>
            <person name="Tallon L.J."/>
            <person name="Jenkins J."/>
            <person name="Rooney T."/>
            <person name="Rizzo M."/>
            <person name="Walts A."/>
            <person name="Utterback T."/>
            <person name="Fujii C.Y."/>
            <person name="Shea T.P."/>
            <person name="Creasy T.H."/>
            <person name="Haas B."/>
            <person name="Maiti R."/>
            <person name="Wu D."/>
            <person name="Peterson J."/>
            <person name="Van Aken S."/>
            <person name="Pai G."/>
            <person name="Militscher J."/>
            <person name="Sellers P."/>
            <person name="Gill J.E."/>
            <person name="Feldblyum T.V."/>
            <person name="Preuss D."/>
            <person name="Lin X."/>
            <person name="Nierman W.C."/>
            <person name="Salzberg S.L."/>
            <person name="White O."/>
            <person name="Venter J.C."/>
            <person name="Fraser C.M."/>
            <person name="Kaneko T."/>
            <person name="Nakamura Y."/>
            <person name="Sato S."/>
            <person name="Kato T."/>
            <person name="Asamizu E."/>
            <person name="Sasamoto S."/>
            <person name="Kimura T."/>
            <person name="Idesawa K."/>
            <person name="Kawashima K."/>
            <person name="Kishida Y."/>
            <person name="Kiyokawa C."/>
            <person name="Kohara M."/>
            <person name="Matsumoto M."/>
            <person name="Matsuno A."/>
            <person name="Muraki A."/>
            <person name="Nakayama S."/>
            <person name="Nakazaki N."/>
            <person name="Shinpo S."/>
            <person name="Takeuchi C."/>
            <person name="Wada T."/>
            <person name="Watanabe A."/>
            <person name="Yamada M."/>
            <person name="Yasuda M."/>
            <person name="Tabata S."/>
        </authorList>
    </citation>
    <scope>NUCLEOTIDE SEQUENCE [LARGE SCALE GENOMIC DNA]</scope>
    <source>
        <strain>cv. Columbia</strain>
    </source>
</reference>
<reference key="2">
    <citation type="journal article" date="2017" name="Plant J.">
        <title>Araport11: a complete reannotation of the Arabidopsis thaliana reference genome.</title>
        <authorList>
            <person name="Cheng C.Y."/>
            <person name="Krishnakumar V."/>
            <person name="Chan A.P."/>
            <person name="Thibaud-Nissen F."/>
            <person name="Schobel S."/>
            <person name="Town C.D."/>
        </authorList>
    </citation>
    <scope>GENOME REANNOTATION</scope>
    <source>
        <strain>cv. Columbia</strain>
    </source>
</reference>
<reference key="3">
    <citation type="journal article" date="2011" name="Proc. Natl. Acad. Sci. U.S.A.">
        <title>Plastid gene expression and plant development require a plastidic protein of the mitochondrial transcription termination factor family.</title>
        <authorList>
            <person name="Babiychuk E."/>
            <person name="Vandepoele K."/>
            <person name="Wissing J."/>
            <person name="Garcia-Diaz M."/>
            <person name="De Rycke R."/>
            <person name="Akbari H."/>
            <person name="Joubes J."/>
            <person name="Beeckman T."/>
            <person name="Jaensch L."/>
            <person name="Frentzen M."/>
            <person name="Van Montagu M.C."/>
            <person name="Kushnir S."/>
        </authorList>
    </citation>
    <scope>SUBCELLULAR LOCATION</scope>
</reference>
<reference key="4">
    <citation type="journal article" date="2012" name="Front. Plant Sci.">
        <title>Arabidopsis thaliana mTERF proteins: evolution and functional classification.</title>
        <authorList>
            <person name="Kleine T."/>
        </authorList>
    </citation>
    <scope>GENE FAMILY</scope>
</reference>
<reference key="5">
    <citation type="journal article" date="2012" name="Plant Cell">
        <title>Mutations in an Arabidopsis mitochondrial transcription termination factor-related protein enhance thermotolerance in the absence of the major molecular chaperone HSP101.</title>
        <authorList>
            <person name="Kim M."/>
            <person name="Lee U."/>
            <person name="Small I."/>
            <person name="des Francs-Small C.C."/>
            <person name="Vierling E."/>
        </authorList>
    </citation>
    <scope>FUNCTION</scope>
    <scope>SUBCELLULAR LOCATION</scope>
    <scope>DISRUPTION PHENOTYPE</scope>
    <scope>MUTAGENESIS OF GLY-105</scope>
</reference>
<evidence type="ECO:0000255" key="1"/>
<evidence type="ECO:0000269" key="2">
    <source>
    </source>
</evidence>
<evidence type="ECO:0000269" key="3">
    <source>
    </source>
</evidence>
<evidence type="ECO:0000303" key="4">
    <source>
    </source>
</evidence>
<evidence type="ECO:0000303" key="5">
    <source>
    </source>
</evidence>
<evidence type="ECO:0000305" key="6"/>
<evidence type="ECO:0000312" key="7">
    <source>
        <dbReference type="Araport" id="AT3G60400"/>
    </source>
</evidence>
<evidence type="ECO:0000312" key="8">
    <source>
        <dbReference type="EMBL" id="CAB81826.1"/>
    </source>
</evidence>
<accession>Q9M219</accession>
<gene>
    <name evidence="5" type="primary">MTERF18</name>
    <name evidence="4" type="synonym">SHOT1</name>
    <name evidence="7" type="ordered locus">At3g60400</name>
    <name evidence="8" type="ORF">T8B10_60</name>
</gene>
<feature type="transit peptide" description="Mitochondrion" evidence="1">
    <location>
        <begin position="1"/>
        <end position="58"/>
    </location>
</feature>
<feature type="chain" id="PRO_0000436203" description="Transcription termination factor MTEF18, mitochondrial">
    <location>
        <begin position="59"/>
        <end position="558"/>
    </location>
</feature>
<feature type="mutagenesis site" description="In shot1-1; short hypocotyl when grown in the dark." evidence="3">
    <original>G</original>
    <variation>D</variation>
    <location>
        <position position="105"/>
    </location>
</feature>
<proteinExistence type="evidence at protein level"/>
<name>MTEFH_ARATH</name>